<organism>
    <name type="scientific">Caulobacter sp. (strain K31)</name>
    <dbReference type="NCBI Taxonomy" id="366602"/>
    <lineage>
        <taxon>Bacteria</taxon>
        <taxon>Pseudomonadati</taxon>
        <taxon>Pseudomonadota</taxon>
        <taxon>Alphaproteobacteria</taxon>
        <taxon>Caulobacterales</taxon>
        <taxon>Caulobacteraceae</taxon>
        <taxon>Caulobacter</taxon>
    </lineage>
</organism>
<keyword id="KW-0687">Ribonucleoprotein</keyword>
<keyword id="KW-0689">Ribosomal protein</keyword>
<keyword id="KW-0694">RNA-binding</keyword>
<keyword id="KW-0699">rRNA-binding</keyword>
<reference key="1">
    <citation type="submission" date="2008-01" db="EMBL/GenBank/DDBJ databases">
        <title>Complete sequence of chromosome of Caulobacter sp. K31.</title>
        <authorList>
            <consortium name="US DOE Joint Genome Institute"/>
            <person name="Copeland A."/>
            <person name="Lucas S."/>
            <person name="Lapidus A."/>
            <person name="Barry K."/>
            <person name="Glavina del Rio T."/>
            <person name="Dalin E."/>
            <person name="Tice H."/>
            <person name="Pitluck S."/>
            <person name="Bruce D."/>
            <person name="Goodwin L."/>
            <person name="Thompson L.S."/>
            <person name="Brettin T."/>
            <person name="Detter J.C."/>
            <person name="Han C."/>
            <person name="Schmutz J."/>
            <person name="Larimer F."/>
            <person name="Land M."/>
            <person name="Hauser L."/>
            <person name="Kyrpides N."/>
            <person name="Kim E."/>
            <person name="Stephens C."/>
            <person name="Richardson P."/>
        </authorList>
    </citation>
    <scope>NUCLEOTIDE SEQUENCE [LARGE SCALE GENOMIC DNA]</scope>
    <source>
        <strain>K31</strain>
    </source>
</reference>
<name>RL23_CAUSK</name>
<comment type="function">
    <text evidence="1">One of the early assembly proteins it binds 23S rRNA. One of the proteins that surrounds the polypeptide exit tunnel on the outside of the ribosome. Forms the main docking site for trigger factor binding to the ribosome.</text>
</comment>
<comment type="subunit">
    <text evidence="1">Part of the 50S ribosomal subunit. Contacts protein L29, and trigger factor when it is bound to the ribosome.</text>
</comment>
<comment type="similarity">
    <text evidence="1">Belongs to the universal ribosomal protein uL23 family.</text>
</comment>
<gene>
    <name evidence="1" type="primary">rplW</name>
    <name type="ordered locus">Caul_1616</name>
</gene>
<sequence>MAATARHYDTILSPVITEKATLLSEQNKVVFRVSADASKDEIAAAVEELFKVKVTKVNTLVTKGKTKRFRGIIGRRSDVKKAIVTLAEGQSIDITTGL</sequence>
<dbReference type="EMBL" id="CP000927">
    <property type="protein sequence ID" value="ABZ70745.1"/>
    <property type="molecule type" value="Genomic_DNA"/>
</dbReference>
<dbReference type="SMR" id="B0T2C4"/>
<dbReference type="STRING" id="366602.Caul_1616"/>
<dbReference type="KEGG" id="cak:Caul_1616"/>
<dbReference type="eggNOG" id="COG0089">
    <property type="taxonomic scope" value="Bacteria"/>
</dbReference>
<dbReference type="HOGENOM" id="CLU_037562_3_1_5"/>
<dbReference type="OrthoDB" id="9793353at2"/>
<dbReference type="GO" id="GO:1990904">
    <property type="term" value="C:ribonucleoprotein complex"/>
    <property type="evidence" value="ECO:0007669"/>
    <property type="project" value="UniProtKB-KW"/>
</dbReference>
<dbReference type="GO" id="GO:0005840">
    <property type="term" value="C:ribosome"/>
    <property type="evidence" value="ECO:0007669"/>
    <property type="project" value="UniProtKB-KW"/>
</dbReference>
<dbReference type="GO" id="GO:0019843">
    <property type="term" value="F:rRNA binding"/>
    <property type="evidence" value="ECO:0007669"/>
    <property type="project" value="UniProtKB-UniRule"/>
</dbReference>
<dbReference type="GO" id="GO:0003735">
    <property type="term" value="F:structural constituent of ribosome"/>
    <property type="evidence" value="ECO:0007669"/>
    <property type="project" value="InterPro"/>
</dbReference>
<dbReference type="GO" id="GO:0006412">
    <property type="term" value="P:translation"/>
    <property type="evidence" value="ECO:0007669"/>
    <property type="project" value="UniProtKB-UniRule"/>
</dbReference>
<dbReference type="FunFam" id="3.30.70.330:FF:000001">
    <property type="entry name" value="50S ribosomal protein L23"/>
    <property type="match status" value="1"/>
</dbReference>
<dbReference type="Gene3D" id="3.30.70.330">
    <property type="match status" value="1"/>
</dbReference>
<dbReference type="HAMAP" id="MF_01369_B">
    <property type="entry name" value="Ribosomal_uL23_B"/>
    <property type="match status" value="1"/>
</dbReference>
<dbReference type="InterPro" id="IPR012677">
    <property type="entry name" value="Nucleotide-bd_a/b_plait_sf"/>
</dbReference>
<dbReference type="InterPro" id="IPR013025">
    <property type="entry name" value="Ribosomal_uL23-like"/>
</dbReference>
<dbReference type="InterPro" id="IPR012678">
    <property type="entry name" value="Ribosomal_uL23/eL15/eS24_sf"/>
</dbReference>
<dbReference type="InterPro" id="IPR001014">
    <property type="entry name" value="Ribosomal_uL23_CS"/>
</dbReference>
<dbReference type="NCBIfam" id="NF004359">
    <property type="entry name" value="PRK05738.1-3"/>
    <property type="match status" value="1"/>
</dbReference>
<dbReference type="NCBIfam" id="NF004360">
    <property type="entry name" value="PRK05738.1-5"/>
    <property type="match status" value="1"/>
</dbReference>
<dbReference type="NCBIfam" id="NF004363">
    <property type="entry name" value="PRK05738.2-4"/>
    <property type="match status" value="1"/>
</dbReference>
<dbReference type="PANTHER" id="PTHR11620">
    <property type="entry name" value="60S RIBOSOMAL PROTEIN L23A"/>
    <property type="match status" value="1"/>
</dbReference>
<dbReference type="Pfam" id="PF00276">
    <property type="entry name" value="Ribosomal_L23"/>
    <property type="match status" value="1"/>
</dbReference>
<dbReference type="SUPFAM" id="SSF54189">
    <property type="entry name" value="Ribosomal proteins S24e, L23 and L15e"/>
    <property type="match status" value="1"/>
</dbReference>
<dbReference type="PROSITE" id="PS00050">
    <property type="entry name" value="RIBOSOMAL_L23"/>
    <property type="match status" value="1"/>
</dbReference>
<proteinExistence type="inferred from homology"/>
<evidence type="ECO:0000255" key="1">
    <source>
        <dbReference type="HAMAP-Rule" id="MF_01369"/>
    </source>
</evidence>
<evidence type="ECO:0000305" key="2"/>
<feature type="chain" id="PRO_1000087210" description="Large ribosomal subunit protein uL23">
    <location>
        <begin position="1"/>
        <end position="98"/>
    </location>
</feature>
<protein>
    <recommendedName>
        <fullName evidence="1">Large ribosomal subunit protein uL23</fullName>
    </recommendedName>
    <alternativeName>
        <fullName evidence="2">50S ribosomal protein L23</fullName>
    </alternativeName>
</protein>
<accession>B0T2C4</accession>